<keyword id="KW-0975">Bacterial flagellum</keyword>
<keyword id="KW-0998">Cell outer membrane</keyword>
<keyword id="KW-0449">Lipoprotein</keyword>
<keyword id="KW-0472">Membrane</keyword>
<keyword id="KW-0564">Palmitate</keyword>
<keyword id="KW-0732">Signal</keyword>
<sequence>MKRLLCLLLLTTLTGCETLLIKNPSAQESEVTSATTNVDAVEGDKAKEEDSGIIDTLRGRNDPIAGDPAWAPIHPKEKPEHYAAATGSLFNVDHAQDMYDDTKPRGLGDIVTVMLAENTKAAKSADAELSKSNDSSMDPLQVGGQELQMGGQYNFSYELSNDNNFTGNTSANQSNSLSGSITVEVIEVLSNGNLLIRGEKWLTLNTGDEYIRLSGTIRPDDINFDNTIDSTRISNARIQYSGTGDQQDMQEPGFLARFFNVAL</sequence>
<gene>
    <name evidence="1" type="primary">flgH</name>
    <name type="ordered locus">VFMJ11_2003</name>
</gene>
<dbReference type="EMBL" id="CP001139">
    <property type="protein sequence ID" value="ACH65872.1"/>
    <property type="molecule type" value="Genomic_DNA"/>
</dbReference>
<dbReference type="RefSeq" id="WP_011262373.1">
    <property type="nucleotide sequence ID" value="NC_011184.1"/>
</dbReference>
<dbReference type="SMR" id="B5FGS5"/>
<dbReference type="GeneID" id="54164569"/>
<dbReference type="KEGG" id="vfm:VFMJ11_2003"/>
<dbReference type="HOGENOM" id="CLU_069313_0_2_6"/>
<dbReference type="Proteomes" id="UP000001857">
    <property type="component" value="Chromosome I"/>
</dbReference>
<dbReference type="GO" id="GO:0009427">
    <property type="term" value="C:bacterial-type flagellum basal body, distal rod, L ring"/>
    <property type="evidence" value="ECO:0007669"/>
    <property type="project" value="InterPro"/>
</dbReference>
<dbReference type="GO" id="GO:0009279">
    <property type="term" value="C:cell outer membrane"/>
    <property type="evidence" value="ECO:0007669"/>
    <property type="project" value="UniProtKB-SubCell"/>
</dbReference>
<dbReference type="GO" id="GO:0003774">
    <property type="term" value="F:cytoskeletal motor activity"/>
    <property type="evidence" value="ECO:0007669"/>
    <property type="project" value="InterPro"/>
</dbReference>
<dbReference type="GO" id="GO:0071973">
    <property type="term" value="P:bacterial-type flagellum-dependent cell motility"/>
    <property type="evidence" value="ECO:0007669"/>
    <property type="project" value="InterPro"/>
</dbReference>
<dbReference type="HAMAP" id="MF_00415">
    <property type="entry name" value="FlgH"/>
    <property type="match status" value="1"/>
</dbReference>
<dbReference type="InterPro" id="IPR000527">
    <property type="entry name" value="Flag_Lring"/>
</dbReference>
<dbReference type="NCBIfam" id="NF001302">
    <property type="entry name" value="PRK00249.1-2"/>
    <property type="match status" value="1"/>
</dbReference>
<dbReference type="PANTHER" id="PTHR34933">
    <property type="entry name" value="FLAGELLAR L-RING PROTEIN"/>
    <property type="match status" value="1"/>
</dbReference>
<dbReference type="PANTHER" id="PTHR34933:SF1">
    <property type="entry name" value="FLAGELLAR L-RING PROTEIN"/>
    <property type="match status" value="1"/>
</dbReference>
<dbReference type="Pfam" id="PF02107">
    <property type="entry name" value="FlgH"/>
    <property type="match status" value="1"/>
</dbReference>
<dbReference type="PRINTS" id="PR01008">
    <property type="entry name" value="FLGLRINGFLGH"/>
</dbReference>
<dbReference type="PROSITE" id="PS51257">
    <property type="entry name" value="PROKAR_LIPOPROTEIN"/>
    <property type="match status" value="1"/>
</dbReference>
<evidence type="ECO:0000255" key="1">
    <source>
        <dbReference type="HAMAP-Rule" id="MF_00415"/>
    </source>
</evidence>
<evidence type="ECO:0000256" key="2">
    <source>
        <dbReference type="SAM" id="MobiDB-lite"/>
    </source>
</evidence>
<proteinExistence type="inferred from homology"/>
<feature type="signal peptide" evidence="1">
    <location>
        <begin position="1"/>
        <end position="15"/>
    </location>
</feature>
<feature type="chain" id="PRO_1000123963" description="Flagellar L-ring protein">
    <location>
        <begin position="16"/>
        <end position="263"/>
    </location>
</feature>
<feature type="region of interest" description="Disordered" evidence="2">
    <location>
        <begin position="123"/>
        <end position="143"/>
    </location>
</feature>
<feature type="lipid moiety-binding region" description="N-palmitoyl cysteine" evidence="1">
    <location>
        <position position="16"/>
    </location>
</feature>
<feature type="lipid moiety-binding region" description="S-diacylglycerol cysteine" evidence="1">
    <location>
        <position position="16"/>
    </location>
</feature>
<name>FLGH_ALIFM</name>
<comment type="function">
    <text evidence="1">Assembles around the rod to form the L-ring and probably protects the motor/basal body from shearing forces during rotation.</text>
</comment>
<comment type="subunit">
    <text evidence="1">The basal body constitutes a major portion of the flagellar organelle and consists of four rings (L,P,S, and M) mounted on a central rod.</text>
</comment>
<comment type="subcellular location">
    <subcellularLocation>
        <location evidence="1">Cell outer membrane</location>
        <topology evidence="1">Lipid-anchor</topology>
    </subcellularLocation>
    <subcellularLocation>
        <location evidence="1">Bacterial flagellum basal body</location>
    </subcellularLocation>
</comment>
<comment type="similarity">
    <text evidence="1">Belongs to the FlgH family.</text>
</comment>
<reference key="1">
    <citation type="submission" date="2008-08" db="EMBL/GenBank/DDBJ databases">
        <title>Complete sequence of Vibrio fischeri strain MJ11.</title>
        <authorList>
            <person name="Mandel M.J."/>
            <person name="Stabb E.V."/>
            <person name="Ruby E.G."/>
            <person name="Ferriera S."/>
            <person name="Johnson J."/>
            <person name="Kravitz S."/>
            <person name="Beeson K."/>
            <person name="Sutton G."/>
            <person name="Rogers Y.-H."/>
            <person name="Friedman R."/>
            <person name="Frazier M."/>
            <person name="Venter J.C."/>
        </authorList>
    </citation>
    <scope>NUCLEOTIDE SEQUENCE [LARGE SCALE GENOMIC DNA]</scope>
    <source>
        <strain>MJ11</strain>
    </source>
</reference>
<organism>
    <name type="scientific">Aliivibrio fischeri (strain MJ11)</name>
    <name type="common">Vibrio fischeri</name>
    <dbReference type="NCBI Taxonomy" id="388396"/>
    <lineage>
        <taxon>Bacteria</taxon>
        <taxon>Pseudomonadati</taxon>
        <taxon>Pseudomonadota</taxon>
        <taxon>Gammaproteobacteria</taxon>
        <taxon>Vibrionales</taxon>
        <taxon>Vibrionaceae</taxon>
        <taxon>Aliivibrio</taxon>
    </lineage>
</organism>
<accession>B5FGS5</accession>
<protein>
    <recommendedName>
        <fullName evidence="1">Flagellar L-ring protein</fullName>
    </recommendedName>
    <alternativeName>
        <fullName evidence="1">Basal body L-ring protein</fullName>
    </alternativeName>
</protein>